<sequence length="137" mass="15423">MPTISQLIRKRRVDKIVKTKAPALSYGFNNLKNKVQKYKSPQKSGVCIRVTTMTPKKPNSALRKYARVRLSNGTEVNAYIPGIGHTLQEHSVVLIRGGRVKDLPGVRYHIIRGILDAKGVINRKQSRSKYGSKKNKN</sequence>
<organism>
    <name type="scientific">Phytoplasma mali (strain AT)</name>
    <dbReference type="NCBI Taxonomy" id="482235"/>
    <lineage>
        <taxon>Bacteria</taxon>
        <taxon>Bacillati</taxon>
        <taxon>Mycoplasmatota</taxon>
        <taxon>Mollicutes</taxon>
        <taxon>Acholeplasmatales</taxon>
        <taxon>Acholeplasmataceae</taxon>
        <taxon>Candidatus Phytoplasma</taxon>
        <taxon>16SrX (Apple proliferation group)</taxon>
    </lineage>
</organism>
<evidence type="ECO:0000250" key="1"/>
<evidence type="ECO:0000255" key="2">
    <source>
        <dbReference type="HAMAP-Rule" id="MF_00403"/>
    </source>
</evidence>
<evidence type="ECO:0000305" key="3"/>
<keyword id="KW-0488">Methylation</keyword>
<keyword id="KW-1185">Reference proteome</keyword>
<keyword id="KW-0687">Ribonucleoprotein</keyword>
<keyword id="KW-0689">Ribosomal protein</keyword>
<keyword id="KW-0694">RNA-binding</keyword>
<keyword id="KW-0699">rRNA-binding</keyword>
<keyword id="KW-0820">tRNA-binding</keyword>
<protein>
    <recommendedName>
        <fullName evidence="2">Small ribosomal subunit protein uS12</fullName>
    </recommendedName>
    <alternativeName>
        <fullName evidence="3">30S ribosomal protein S12</fullName>
    </alternativeName>
</protein>
<reference key="1">
    <citation type="journal article" date="2008" name="BMC Genomics">
        <title>The linear chromosome of the plant-pathogenic mycoplasma 'Candidatus Phytoplasma mali'.</title>
        <authorList>
            <person name="Kube M."/>
            <person name="Schneider B."/>
            <person name="Kuhl H."/>
            <person name="Dandekar T."/>
            <person name="Heitmann K."/>
            <person name="Migdoll A.M."/>
            <person name="Reinhardt R."/>
            <person name="Seemueller E."/>
        </authorList>
    </citation>
    <scope>NUCLEOTIDE SEQUENCE [LARGE SCALE GENOMIC DNA]</scope>
    <source>
        <strain>AT</strain>
    </source>
</reference>
<accession>B3QZH2</accession>
<comment type="function">
    <text evidence="2">With S4 and S5 plays an important role in translational accuracy.</text>
</comment>
<comment type="function">
    <text evidence="2">Interacts with and stabilizes bases of the 16S rRNA that are involved in tRNA selection in the A site and with the mRNA backbone. Located at the interface of the 30S and 50S subunits, it traverses the body of the 30S subunit contacting proteins on the other side and probably holding the rRNA structure together. The combined cluster of proteins S8, S12 and S17 appears to hold together the shoulder and platform of the 30S subunit.</text>
</comment>
<comment type="subunit">
    <text evidence="2">Part of the 30S ribosomal subunit. Contacts proteins S8 and S17. May interact with IF1 in the 30S initiation complex.</text>
</comment>
<comment type="similarity">
    <text evidence="2">Belongs to the universal ribosomal protein uS12 family.</text>
</comment>
<dbReference type="EMBL" id="CU469464">
    <property type="protein sequence ID" value="CAP18579.1"/>
    <property type="molecule type" value="Genomic_DNA"/>
</dbReference>
<dbReference type="SMR" id="B3QZH2"/>
<dbReference type="STRING" id="37692.ATP_00392"/>
<dbReference type="KEGG" id="pml:ATP_00392"/>
<dbReference type="eggNOG" id="COG0048">
    <property type="taxonomic scope" value="Bacteria"/>
</dbReference>
<dbReference type="HOGENOM" id="CLU_104295_1_2_14"/>
<dbReference type="Proteomes" id="UP000002020">
    <property type="component" value="Chromosome"/>
</dbReference>
<dbReference type="GO" id="GO:0015935">
    <property type="term" value="C:small ribosomal subunit"/>
    <property type="evidence" value="ECO:0007669"/>
    <property type="project" value="InterPro"/>
</dbReference>
<dbReference type="GO" id="GO:0019843">
    <property type="term" value="F:rRNA binding"/>
    <property type="evidence" value="ECO:0007669"/>
    <property type="project" value="UniProtKB-UniRule"/>
</dbReference>
<dbReference type="GO" id="GO:0003735">
    <property type="term" value="F:structural constituent of ribosome"/>
    <property type="evidence" value="ECO:0007669"/>
    <property type="project" value="InterPro"/>
</dbReference>
<dbReference type="GO" id="GO:0000049">
    <property type="term" value="F:tRNA binding"/>
    <property type="evidence" value="ECO:0007669"/>
    <property type="project" value="UniProtKB-UniRule"/>
</dbReference>
<dbReference type="GO" id="GO:0006412">
    <property type="term" value="P:translation"/>
    <property type="evidence" value="ECO:0007669"/>
    <property type="project" value="UniProtKB-UniRule"/>
</dbReference>
<dbReference type="CDD" id="cd03368">
    <property type="entry name" value="Ribosomal_S12"/>
    <property type="match status" value="1"/>
</dbReference>
<dbReference type="FunFam" id="2.40.50.140:FF:000099">
    <property type="entry name" value="Ribosomal protein S12, mitochondrial"/>
    <property type="match status" value="1"/>
</dbReference>
<dbReference type="Gene3D" id="2.40.50.140">
    <property type="entry name" value="Nucleic acid-binding proteins"/>
    <property type="match status" value="1"/>
</dbReference>
<dbReference type="HAMAP" id="MF_00403_B">
    <property type="entry name" value="Ribosomal_uS12_B"/>
    <property type="match status" value="1"/>
</dbReference>
<dbReference type="InterPro" id="IPR012340">
    <property type="entry name" value="NA-bd_OB-fold"/>
</dbReference>
<dbReference type="InterPro" id="IPR006032">
    <property type="entry name" value="Ribosomal_uS12"/>
</dbReference>
<dbReference type="InterPro" id="IPR005679">
    <property type="entry name" value="Ribosomal_uS12_bac"/>
</dbReference>
<dbReference type="NCBIfam" id="TIGR00981">
    <property type="entry name" value="rpsL_bact"/>
    <property type="match status" value="1"/>
</dbReference>
<dbReference type="PANTHER" id="PTHR11652">
    <property type="entry name" value="30S RIBOSOMAL PROTEIN S12 FAMILY MEMBER"/>
    <property type="match status" value="1"/>
</dbReference>
<dbReference type="Pfam" id="PF00164">
    <property type="entry name" value="Ribosom_S12_S23"/>
    <property type="match status" value="1"/>
</dbReference>
<dbReference type="PRINTS" id="PR01034">
    <property type="entry name" value="RIBOSOMALS12"/>
</dbReference>
<dbReference type="SUPFAM" id="SSF50249">
    <property type="entry name" value="Nucleic acid-binding proteins"/>
    <property type="match status" value="1"/>
</dbReference>
<dbReference type="PROSITE" id="PS00055">
    <property type="entry name" value="RIBOSOMAL_S12"/>
    <property type="match status" value="1"/>
</dbReference>
<proteinExistence type="inferred from homology"/>
<name>RS12_PHYMT</name>
<feature type="chain" id="PRO_1000134649" description="Small ribosomal subunit protein uS12">
    <location>
        <begin position="1"/>
        <end position="137"/>
    </location>
</feature>
<feature type="modified residue" description="3-methylthioaspartic acid" evidence="1">
    <location>
        <position position="102"/>
    </location>
</feature>
<gene>
    <name evidence="2" type="primary">rpsL</name>
    <name type="ordered locus">ATP_00392</name>
</gene>